<proteinExistence type="evidence at protein level"/>
<name>RS27_BOVIN</name>
<feature type="chain" id="PRO_0000240300" description="Small ribosomal subunit protein eS27">
    <location>
        <begin position="1"/>
        <end position="84"/>
    </location>
</feature>
<feature type="zinc finger region" description="C4-type" evidence="2">
    <location>
        <begin position="38"/>
        <end position="60"/>
    </location>
</feature>
<feature type="region of interest" description="Disordered" evidence="3">
    <location>
        <begin position="1"/>
        <end position="23"/>
    </location>
</feature>
<feature type="compositionally biased region" description="Basic and acidic residues" evidence="3">
    <location>
        <begin position="1"/>
        <end position="16"/>
    </location>
</feature>
<feature type="modified residue" description="Phosphoserine" evidence="1">
    <location>
        <position position="11"/>
    </location>
</feature>
<feature type="sequence conflict" description="In Ref. 1; ABC84249." evidence="4" ref="1">
    <original>R</original>
    <variation>G</variation>
    <location>
        <position position="80"/>
    </location>
</feature>
<accession>Q2KHT7</accession>
<accession>A1XEE0</accession>
<gene>
    <name type="primary">RPS27</name>
</gene>
<comment type="function">
    <text evidence="1">Component of the small ribosomal subunit. The ribosome is a large ribonucleoprotein complex responsible for the synthesis of proteins in the cell. Required for proper rRNA processing and maturation of 18S rRNAs. Part of the small subunit (SSU) processome, first precursor of the small eukaryotic ribosomal subunit. During the assembly of the SSU processome in the nucleolus, many ribosome biogenesis factors, an RNA chaperone and ribosomal proteins associate with the nascent pre-rRNA and work in concert to generate RNA folding, modifications, rearrangements and cleavage as well as targeted degradation of pre-ribosomal RNA by the RNA exosome.</text>
</comment>
<comment type="cofactor">
    <cofactor evidence="4">
        <name>Zn(2+)</name>
        <dbReference type="ChEBI" id="CHEBI:29105"/>
    </cofactor>
    <text evidence="4">Binds 1 zinc ion per subunit.</text>
</comment>
<comment type="subunit">
    <text evidence="1">Component of the small ribosomal subunit. Part of the small subunit (SSU) processome, composed of more than 70 proteins and the RNA chaperone small nucleolar RNA (snoRNA) U3.</text>
</comment>
<comment type="subcellular location">
    <subcellularLocation>
        <location evidence="1">Cytoplasm</location>
    </subcellularLocation>
    <subcellularLocation>
        <location evidence="1">Nucleus</location>
        <location evidence="1">Nucleolus</location>
    </subcellularLocation>
</comment>
<comment type="similarity">
    <text evidence="4">Belongs to the eukaryotic ribosomal protein eS27 family.</text>
</comment>
<reference key="1">
    <citation type="submission" date="2005-12" db="EMBL/GenBank/DDBJ databases">
        <title>Identification and quantitative analysis of gene transcripts associated with bovine blastocyst formation.</title>
        <authorList>
            <person name="Goossens K."/>
            <person name="Van Poucke M."/>
            <person name="Van Soom A."/>
            <person name="Vandesompele J."/>
            <person name="Van Zeveren A."/>
            <person name="Peelman L.J."/>
        </authorList>
    </citation>
    <scope>NUCLEOTIDE SEQUENCE [MRNA]</scope>
</reference>
<reference key="2">
    <citation type="submission" date="2006-01" db="EMBL/GenBank/DDBJ databases">
        <authorList>
            <consortium name="NIH - Mammalian Gene Collection (MGC) project"/>
        </authorList>
    </citation>
    <scope>NUCLEOTIDE SEQUENCE [LARGE SCALE MRNA]</scope>
    <source>
        <strain>Hereford</strain>
        <tissue>Testis</tissue>
    </source>
</reference>
<keyword id="KW-0002">3D-structure</keyword>
<keyword id="KW-0963">Cytoplasm</keyword>
<keyword id="KW-0479">Metal-binding</keyword>
<keyword id="KW-0539">Nucleus</keyword>
<keyword id="KW-0597">Phosphoprotein</keyword>
<keyword id="KW-1185">Reference proteome</keyword>
<keyword id="KW-0687">Ribonucleoprotein</keyword>
<keyword id="KW-0689">Ribosomal protein</keyword>
<keyword id="KW-0862">Zinc</keyword>
<keyword id="KW-0863">Zinc-finger</keyword>
<dbReference type="EMBL" id="DQ347615">
    <property type="protein sequence ID" value="ABC84249.1"/>
    <property type="molecule type" value="mRNA"/>
</dbReference>
<dbReference type="EMBL" id="BC112887">
    <property type="protein sequence ID" value="AAI12888.1"/>
    <property type="molecule type" value="mRNA"/>
</dbReference>
<dbReference type="RefSeq" id="NP_001091604.1">
    <property type="nucleotide sequence ID" value="NM_001098135.2"/>
</dbReference>
<dbReference type="PDB" id="6MTD">
    <property type="method" value="EM"/>
    <property type="resolution" value="3.30 A"/>
    <property type="chains" value="bb=2-84"/>
</dbReference>
<dbReference type="PDB" id="6MTE">
    <property type="method" value="EM"/>
    <property type="resolution" value="3.40 A"/>
    <property type="chains" value="bb=2-84"/>
</dbReference>
<dbReference type="PDBsum" id="6MTD"/>
<dbReference type="PDBsum" id="6MTE"/>
<dbReference type="EMDB" id="EMD-9240"/>
<dbReference type="EMDB" id="EMD-9242"/>
<dbReference type="SMR" id="Q2KHT7"/>
<dbReference type="BioGRID" id="543247">
    <property type="interactions" value="1"/>
</dbReference>
<dbReference type="FunCoup" id="Q2KHT7">
    <property type="interactions" value="2615"/>
</dbReference>
<dbReference type="STRING" id="9913.ENSBTAP00000018414"/>
<dbReference type="PaxDb" id="9913-ENSBTAP00000018414"/>
<dbReference type="PeptideAtlas" id="Q2KHT7"/>
<dbReference type="GeneID" id="615638"/>
<dbReference type="KEGG" id="bta:615638"/>
<dbReference type="CTD" id="6232"/>
<dbReference type="VEuPathDB" id="HostDB:ENSBTAG00000013866"/>
<dbReference type="eggNOG" id="KOG1779">
    <property type="taxonomic scope" value="Eukaryota"/>
</dbReference>
<dbReference type="HOGENOM" id="CLU_130128_3_0_1"/>
<dbReference type="InParanoid" id="Q2KHT7"/>
<dbReference type="OMA" id="IRSCARI"/>
<dbReference type="OrthoDB" id="5567124at2759"/>
<dbReference type="TreeFam" id="TF300265"/>
<dbReference type="Reactome" id="R-BTA-141444">
    <property type="pathway name" value="Amplification of signal from unattached kinetochores via a MAD2 inhibitory signal"/>
</dbReference>
<dbReference type="Reactome" id="R-BTA-156827">
    <property type="pathway name" value="L13a-mediated translational silencing of Ceruloplasmin expression"/>
</dbReference>
<dbReference type="Reactome" id="R-BTA-1799339">
    <property type="pathway name" value="SRP-dependent cotranslational protein targeting to membrane"/>
</dbReference>
<dbReference type="Reactome" id="R-BTA-2467813">
    <property type="pathway name" value="Separation of Sister Chromatids"/>
</dbReference>
<dbReference type="Reactome" id="R-BTA-2500257">
    <property type="pathway name" value="Resolution of Sister Chromatid Cohesion"/>
</dbReference>
<dbReference type="Reactome" id="R-BTA-5663220">
    <property type="pathway name" value="RHO GTPases Activate Formins"/>
</dbReference>
<dbReference type="Reactome" id="R-BTA-6791226">
    <property type="pathway name" value="Major pathway of rRNA processing in the nucleolus and cytosol"/>
</dbReference>
<dbReference type="Reactome" id="R-BTA-68877">
    <property type="pathway name" value="Mitotic Prometaphase"/>
</dbReference>
<dbReference type="Reactome" id="R-BTA-72649">
    <property type="pathway name" value="Translation initiation complex formation"/>
</dbReference>
<dbReference type="Reactome" id="R-BTA-72689">
    <property type="pathway name" value="Formation of a pool of free 40S subunits"/>
</dbReference>
<dbReference type="Reactome" id="R-BTA-72695">
    <property type="pathway name" value="Formation of the ternary complex, and subsequently, the 43S complex"/>
</dbReference>
<dbReference type="Reactome" id="R-BTA-72702">
    <property type="pathway name" value="Ribosomal scanning and start codon recognition"/>
</dbReference>
<dbReference type="Reactome" id="R-BTA-72706">
    <property type="pathway name" value="GTP hydrolysis and joining of the 60S ribosomal subunit"/>
</dbReference>
<dbReference type="Reactome" id="R-BTA-9648025">
    <property type="pathway name" value="EML4 and NUDC in mitotic spindle formation"/>
</dbReference>
<dbReference type="Reactome" id="R-BTA-975956">
    <property type="pathway name" value="Nonsense Mediated Decay (NMD) independent of the Exon Junction Complex (EJC)"/>
</dbReference>
<dbReference type="Reactome" id="R-BTA-975957">
    <property type="pathway name" value="Nonsense Mediated Decay (NMD) enhanced by the Exon Junction Complex (EJC)"/>
</dbReference>
<dbReference type="Proteomes" id="UP000009136">
    <property type="component" value="Chromosome 3"/>
</dbReference>
<dbReference type="Bgee" id="ENSBTAG00000013866">
    <property type="expression patterns" value="Expressed in mesenteric lymph node and 104 other cell types or tissues"/>
</dbReference>
<dbReference type="GO" id="GO:0022627">
    <property type="term" value="C:cytosolic small ribosomal subunit"/>
    <property type="evidence" value="ECO:0000318"/>
    <property type="project" value="GO_Central"/>
</dbReference>
<dbReference type="GO" id="GO:0005730">
    <property type="term" value="C:nucleolus"/>
    <property type="evidence" value="ECO:0007669"/>
    <property type="project" value="UniProtKB-SubCell"/>
</dbReference>
<dbReference type="GO" id="GO:0032040">
    <property type="term" value="C:small-subunit processome"/>
    <property type="evidence" value="ECO:0000250"/>
    <property type="project" value="UniProtKB"/>
</dbReference>
<dbReference type="GO" id="GO:0003723">
    <property type="term" value="F:RNA binding"/>
    <property type="evidence" value="ECO:0000318"/>
    <property type="project" value="GO_Central"/>
</dbReference>
<dbReference type="GO" id="GO:0003735">
    <property type="term" value="F:structural constituent of ribosome"/>
    <property type="evidence" value="ECO:0000318"/>
    <property type="project" value="GO_Central"/>
</dbReference>
<dbReference type="GO" id="GO:0008270">
    <property type="term" value="F:zinc ion binding"/>
    <property type="evidence" value="ECO:0007669"/>
    <property type="project" value="UniProtKB-KW"/>
</dbReference>
<dbReference type="GO" id="GO:0000028">
    <property type="term" value="P:ribosomal small subunit assembly"/>
    <property type="evidence" value="ECO:0000318"/>
    <property type="project" value="GO_Central"/>
</dbReference>
<dbReference type="GO" id="GO:0042274">
    <property type="term" value="P:ribosomal small subunit biogenesis"/>
    <property type="evidence" value="ECO:0000250"/>
    <property type="project" value="UniProtKB"/>
</dbReference>
<dbReference type="GO" id="GO:0006364">
    <property type="term" value="P:rRNA processing"/>
    <property type="evidence" value="ECO:0000250"/>
    <property type="project" value="UniProtKB"/>
</dbReference>
<dbReference type="GO" id="GO:0006412">
    <property type="term" value="P:translation"/>
    <property type="evidence" value="ECO:0007669"/>
    <property type="project" value="InterPro"/>
</dbReference>
<dbReference type="FunFam" id="2.20.25.100:FF:000001">
    <property type="entry name" value="40S ribosomal protein S27"/>
    <property type="match status" value="1"/>
</dbReference>
<dbReference type="Gene3D" id="2.20.25.100">
    <property type="entry name" value="Zn-binding ribosomal proteins"/>
    <property type="match status" value="1"/>
</dbReference>
<dbReference type="HAMAP" id="MF_00371">
    <property type="entry name" value="Ribosomal_eS27"/>
    <property type="match status" value="1"/>
</dbReference>
<dbReference type="InterPro" id="IPR000592">
    <property type="entry name" value="Ribosomal_eS27"/>
</dbReference>
<dbReference type="InterPro" id="IPR023407">
    <property type="entry name" value="Ribosomal_eS27_Zn-bd_dom_sf"/>
</dbReference>
<dbReference type="InterPro" id="IPR011332">
    <property type="entry name" value="Ribosomal_zn-bd"/>
</dbReference>
<dbReference type="PANTHER" id="PTHR11594">
    <property type="entry name" value="40S RIBOSOMAL PROTEIN S27"/>
    <property type="match status" value="1"/>
</dbReference>
<dbReference type="Pfam" id="PF01667">
    <property type="entry name" value="Ribosomal_S27e"/>
    <property type="match status" value="1"/>
</dbReference>
<dbReference type="SUPFAM" id="SSF57829">
    <property type="entry name" value="Zn-binding ribosomal proteins"/>
    <property type="match status" value="1"/>
</dbReference>
<dbReference type="PROSITE" id="PS01168">
    <property type="entry name" value="RIBOSOMAL_S27E"/>
    <property type="match status" value="1"/>
</dbReference>
<organism>
    <name type="scientific">Bos taurus</name>
    <name type="common">Bovine</name>
    <dbReference type="NCBI Taxonomy" id="9913"/>
    <lineage>
        <taxon>Eukaryota</taxon>
        <taxon>Metazoa</taxon>
        <taxon>Chordata</taxon>
        <taxon>Craniata</taxon>
        <taxon>Vertebrata</taxon>
        <taxon>Euteleostomi</taxon>
        <taxon>Mammalia</taxon>
        <taxon>Eutheria</taxon>
        <taxon>Laurasiatheria</taxon>
        <taxon>Artiodactyla</taxon>
        <taxon>Ruminantia</taxon>
        <taxon>Pecora</taxon>
        <taxon>Bovidae</taxon>
        <taxon>Bovinae</taxon>
        <taxon>Bos</taxon>
    </lineage>
</organism>
<sequence length="84" mass="9461">MPLAKDLLHPSPEEEKRKHKKKRLVQSPNSYFMDVKCPGCYKITTVFSHAQTVVLCVGCSTVLCQPTGGKARLTEGCSFRRKQH</sequence>
<protein>
    <recommendedName>
        <fullName evidence="4">Small ribosomal subunit protein eS27</fullName>
    </recommendedName>
    <alternativeName>
        <fullName>40S ribosomal protein S27</fullName>
    </alternativeName>
</protein>
<evidence type="ECO:0000250" key="1">
    <source>
        <dbReference type="UniProtKB" id="P42677"/>
    </source>
</evidence>
<evidence type="ECO:0000255" key="2"/>
<evidence type="ECO:0000256" key="3">
    <source>
        <dbReference type="SAM" id="MobiDB-lite"/>
    </source>
</evidence>
<evidence type="ECO:0000305" key="4"/>